<feature type="chain" id="PRO_0000084504" description="Lymphocyte-specific protein 1">
    <location>
        <begin position="1"/>
        <end position="330"/>
    </location>
</feature>
<feature type="region of interest" description="Disordered" evidence="3">
    <location>
        <begin position="1"/>
        <end position="246"/>
    </location>
</feature>
<feature type="region of interest" description="Disordered" evidence="3">
    <location>
        <begin position="281"/>
        <end position="302"/>
    </location>
</feature>
<feature type="compositionally biased region" description="Basic and acidic residues" evidence="3">
    <location>
        <begin position="1"/>
        <end position="20"/>
    </location>
</feature>
<feature type="compositionally biased region" description="Basic and acidic residues" evidence="3">
    <location>
        <begin position="37"/>
        <end position="62"/>
    </location>
</feature>
<feature type="compositionally biased region" description="Polar residues" evidence="3">
    <location>
        <begin position="66"/>
        <end position="77"/>
    </location>
</feature>
<feature type="compositionally biased region" description="Basic and acidic residues" evidence="3">
    <location>
        <begin position="113"/>
        <end position="135"/>
    </location>
</feature>
<feature type="compositionally biased region" description="Polar residues" evidence="3">
    <location>
        <begin position="206"/>
        <end position="215"/>
    </location>
</feature>
<feature type="compositionally biased region" description="Polar residues" evidence="3">
    <location>
        <begin position="223"/>
        <end position="242"/>
    </location>
</feature>
<feature type="compositionally biased region" description="Low complexity" evidence="3">
    <location>
        <begin position="291"/>
        <end position="302"/>
    </location>
</feature>
<feature type="modified residue" description="Phosphoserine; by CK2" evidence="2">
    <location>
        <position position="77"/>
    </location>
</feature>
<feature type="modified residue" description="Phosphoserine; by CK2" evidence="2">
    <location>
        <position position="78"/>
    </location>
</feature>
<feature type="modified residue" description="Phosphothreonine" evidence="12 13">
    <location>
        <position position="166"/>
    </location>
</feature>
<feature type="modified residue" description="Phosphoserine" evidence="12 13">
    <location>
        <position position="168"/>
    </location>
</feature>
<feature type="modified residue" description="Phosphoserine" evidence="1">
    <location>
        <position position="179"/>
    </location>
</feature>
<feature type="modified residue" description="Phosphoserine" evidence="13">
    <location>
        <position position="180"/>
    </location>
</feature>
<feature type="modified residue" description="Phosphoserine" evidence="13">
    <location>
        <position position="184"/>
    </location>
</feature>
<feature type="modified residue" description="Phosphoserine; by MAPKAPK2" evidence="4 13">
    <location>
        <position position="243"/>
    </location>
</feature>
<feature type="modified residue" description="N6-acetyllysine" evidence="1">
    <location>
        <position position="318"/>
    </location>
</feature>
<feature type="splice variant" id="VSP_004313" description="In isoform 2." evidence="7 8 9 10">
    <original>MAEAAIDPRCEEQEELHAEDSEG</original>
    <variation>MNGPALLRRNASKRGLEKLLR</variation>
    <location>
        <begin position="1"/>
        <end position="23"/>
    </location>
</feature>
<feature type="mutagenesis site" description="No effect on phosphorylation by PKC, PKA, MAPKAPK2 and CaMK2." evidence="4">
    <original>S</original>
    <variation>A</variation>
    <location>
        <position position="195"/>
    </location>
</feature>
<feature type="mutagenesis site" description="Complete loss of phosphorylation by MAPKAPK2, partial loss of phosphorylation by PKA, no effect on phosphorylation by PKC and CaMK2." evidence="4">
    <original>S</original>
    <variation>A</variation>
    <location>
        <position position="243"/>
    </location>
</feature>
<feature type="mutagenesis site" description="Complete loss of phosphorylation by MAPKAPK2, partial loss of phosphorylation by PKA, no effect on phosphorylation by PKC and CaMK2." evidence="4">
    <original>S</original>
    <variation>E</variation>
    <location>
        <position position="243"/>
    </location>
</feature>
<feature type="sequence conflict" description="In Ref. 9; BAC27463." evidence="11" ref="9">
    <original>SSH</original>
    <variation>RQV</variation>
    <location>
        <begin position="125"/>
        <end position="127"/>
    </location>
</feature>
<feature type="sequence conflict" description="In Ref. 1." evidence="11" ref="1">
    <original>AE</original>
    <variation>PK</variation>
    <location>
        <begin position="155"/>
        <end position="156"/>
    </location>
</feature>
<feature type="sequence conflict" description="In Ref. 7; AAH03796." evidence="11" ref="7">
    <location>
        <begin position="158"/>
        <end position="163"/>
    </location>
</feature>
<feature type="sequence conflict" description="In Ref. 1." evidence="11" ref="1">
    <original>I</original>
    <variation>T</variation>
    <location>
        <position position="160"/>
    </location>
</feature>
<feature type="sequence conflict" description="In Ref. 1." evidence="11" ref="1">
    <original>S</original>
    <variation>N</variation>
    <location>
        <position position="168"/>
    </location>
</feature>
<feature type="sequence conflict" description="In Ref. 1." evidence="11" ref="1">
    <original>S</original>
    <variation>G</variation>
    <location>
        <position position="253"/>
    </location>
</feature>
<feature type="sequence conflict" description="In Ref. 4 and 5." evidence="11" ref="4 5">
    <original>S</original>
    <variation>T</variation>
    <location>
        <position position="283"/>
    </location>
</feature>
<feature type="sequence conflict" description="In Ref. 8; AAB37543." evidence="11" ref="8">
    <original>L</original>
    <variation>Q</variation>
    <location sequence="P19973-2">
        <position position="16"/>
    </location>
</feature>
<dbReference type="EMBL" id="M90316">
    <property type="protein sequence ID" value="AAA65108.1"/>
    <property type="molecule type" value="mRNA"/>
</dbReference>
<dbReference type="EMBL" id="S74179">
    <property type="protein sequence ID" value="AAB32257.1"/>
    <property type="molecule type" value="mRNA"/>
</dbReference>
<dbReference type="EMBL" id="M89956">
    <property type="protein sequence ID" value="AAB48537.1"/>
    <property type="molecule type" value="mRNA"/>
</dbReference>
<dbReference type="EMBL" id="D49691">
    <property type="protein sequence ID" value="BAA08541.1"/>
    <property type="molecule type" value="mRNA"/>
</dbReference>
<dbReference type="EMBL" id="AL603651">
    <property type="status" value="NOT_ANNOTATED_CDS"/>
    <property type="molecule type" value="Genomic_DNA"/>
</dbReference>
<dbReference type="EMBL" id="BC003796">
    <property type="protein sequence ID" value="AAH03796.1"/>
    <property type="molecule type" value="mRNA"/>
</dbReference>
<dbReference type="EMBL" id="U30942">
    <property type="protein sequence ID" value="AAB37542.1"/>
    <property type="molecule type" value="Genomic_DNA"/>
</dbReference>
<dbReference type="EMBL" id="U30939">
    <property type="protein sequence ID" value="AAB37542.1"/>
    <property type="status" value="JOINED"/>
    <property type="molecule type" value="Genomic_DNA"/>
</dbReference>
<dbReference type="EMBL" id="U30941">
    <property type="protein sequence ID" value="AAB37542.1"/>
    <property type="status" value="JOINED"/>
    <property type="molecule type" value="Genomic_DNA"/>
</dbReference>
<dbReference type="EMBL" id="U30942">
    <property type="protein sequence ID" value="AAB37543.1"/>
    <property type="molecule type" value="Genomic_DNA"/>
</dbReference>
<dbReference type="EMBL" id="U30940">
    <property type="protein sequence ID" value="AAB37543.1"/>
    <property type="status" value="JOINED"/>
    <property type="molecule type" value="Genomic_DNA"/>
</dbReference>
<dbReference type="EMBL" id="U30941">
    <property type="protein sequence ID" value="AAB37543.1"/>
    <property type="status" value="JOINED"/>
    <property type="molecule type" value="Genomic_DNA"/>
</dbReference>
<dbReference type="EMBL" id="AK031587">
    <property type="protein sequence ID" value="BAC27463.1"/>
    <property type="molecule type" value="mRNA"/>
</dbReference>
<dbReference type="CCDS" id="CCDS40193.1">
    <molecule id="P19973-2"/>
</dbReference>
<dbReference type="CCDS" id="CCDS52450.1">
    <molecule id="P19973-1"/>
</dbReference>
<dbReference type="PIR" id="A30533">
    <property type="entry name" value="A30533"/>
</dbReference>
<dbReference type="PIR" id="A46521">
    <property type="entry name" value="A46521"/>
</dbReference>
<dbReference type="RefSeq" id="NP_001129543.1">
    <molecule id="P19973-1"/>
    <property type="nucleotide sequence ID" value="NM_001136071.3"/>
</dbReference>
<dbReference type="RefSeq" id="NP_001258437.1">
    <property type="nucleotide sequence ID" value="NM_001271508.1"/>
</dbReference>
<dbReference type="RefSeq" id="NP_001258439.1">
    <molecule id="P19973-1"/>
    <property type="nucleotide sequence ID" value="NM_001271510.2"/>
</dbReference>
<dbReference type="RefSeq" id="NP_062264.1">
    <molecule id="P19973-2"/>
    <property type="nucleotide sequence ID" value="NM_019391.4"/>
</dbReference>
<dbReference type="SMR" id="P19973"/>
<dbReference type="BioGRID" id="201211">
    <property type="interactions" value="4"/>
</dbReference>
<dbReference type="FunCoup" id="P19973">
    <property type="interactions" value="160"/>
</dbReference>
<dbReference type="IntAct" id="P19973">
    <property type="interactions" value="2"/>
</dbReference>
<dbReference type="MINT" id="P19973"/>
<dbReference type="STRING" id="10090.ENSMUSP00000101588"/>
<dbReference type="GlyGen" id="P19973">
    <property type="glycosylation" value="2 sites, 1 O-linked glycan (1 site)"/>
</dbReference>
<dbReference type="iPTMnet" id="P19973"/>
<dbReference type="PhosphoSitePlus" id="P19973"/>
<dbReference type="SwissPalm" id="P19973"/>
<dbReference type="CPTAC" id="non-CPTAC-3471"/>
<dbReference type="jPOST" id="P19973"/>
<dbReference type="PaxDb" id="10090-ENSMUSP00000018963"/>
<dbReference type="PeptideAtlas" id="P19973"/>
<dbReference type="ProteomicsDB" id="292121">
    <molecule id="P19973-1"/>
</dbReference>
<dbReference type="ProteomicsDB" id="292122">
    <molecule id="P19973-2"/>
</dbReference>
<dbReference type="Pumba" id="P19973"/>
<dbReference type="Antibodypedia" id="4493">
    <property type="antibodies" value="656 antibodies from 39 providers"/>
</dbReference>
<dbReference type="DNASU" id="16985"/>
<dbReference type="Ensembl" id="ENSMUST00000018963.11">
    <molecule id="P19973-1"/>
    <property type="protein sequence ID" value="ENSMUSP00000018963.5"/>
    <property type="gene ID" value="ENSMUSG00000018819.11"/>
</dbReference>
<dbReference type="Ensembl" id="ENSMUST00000038946.9">
    <molecule id="P19973-2"/>
    <property type="protein sequence ID" value="ENSMUSP00000040637.3"/>
    <property type="gene ID" value="ENSMUSG00000018819.11"/>
</dbReference>
<dbReference type="Ensembl" id="ENSMUST00000105968.8">
    <molecule id="P19973-1"/>
    <property type="protein sequence ID" value="ENSMUSP00000101588.2"/>
    <property type="gene ID" value="ENSMUSG00000018819.11"/>
</dbReference>
<dbReference type="GeneID" id="16985"/>
<dbReference type="KEGG" id="mmu:16985"/>
<dbReference type="UCSC" id="uc009knb.3">
    <molecule id="P19973-1"/>
    <property type="organism name" value="mouse"/>
</dbReference>
<dbReference type="UCSC" id="uc009knf.2">
    <molecule id="P19973-2"/>
    <property type="organism name" value="mouse"/>
</dbReference>
<dbReference type="AGR" id="MGI:96832"/>
<dbReference type="CTD" id="4046"/>
<dbReference type="MGI" id="MGI:96832">
    <property type="gene designation" value="Lsp1"/>
</dbReference>
<dbReference type="VEuPathDB" id="HostDB:ENSMUSG00000018819"/>
<dbReference type="eggNOG" id="KOG3656">
    <property type="taxonomic scope" value="Eukaryota"/>
</dbReference>
<dbReference type="GeneTree" id="ENSGT00940000153901"/>
<dbReference type="InParanoid" id="P19973"/>
<dbReference type="OMA" id="TRIDDKM"/>
<dbReference type="OrthoDB" id="9947942at2759"/>
<dbReference type="PhylomeDB" id="P19973"/>
<dbReference type="TreeFam" id="TF336257"/>
<dbReference type="BioGRID-ORCS" id="16985">
    <property type="hits" value="0 hits in 77 CRISPR screens"/>
</dbReference>
<dbReference type="PRO" id="PR:P19973"/>
<dbReference type="Proteomes" id="UP000000589">
    <property type="component" value="Chromosome 7"/>
</dbReference>
<dbReference type="RNAct" id="P19973">
    <property type="molecule type" value="protein"/>
</dbReference>
<dbReference type="Bgee" id="ENSMUSG00000018819">
    <property type="expression patterns" value="Expressed in granulocyte and 209 other cell types or tissues"/>
</dbReference>
<dbReference type="ExpressionAtlas" id="P19973">
    <property type="expression patterns" value="baseline and differential"/>
</dbReference>
<dbReference type="GO" id="GO:0005886">
    <property type="term" value="C:plasma membrane"/>
    <property type="evidence" value="ECO:0007669"/>
    <property type="project" value="UniProtKB-SubCell"/>
</dbReference>
<dbReference type="GO" id="GO:0003779">
    <property type="term" value="F:actin binding"/>
    <property type="evidence" value="ECO:0000304"/>
    <property type="project" value="MGI"/>
</dbReference>
<dbReference type="GO" id="GO:0006915">
    <property type="term" value="P:apoptotic process"/>
    <property type="evidence" value="ECO:0000304"/>
    <property type="project" value="MGI"/>
</dbReference>
<dbReference type="GO" id="GO:0098761">
    <property type="term" value="P:cellular response to interleukin-7"/>
    <property type="evidence" value="ECO:0000314"/>
    <property type="project" value="MGI"/>
</dbReference>
<dbReference type="GO" id="GO:0006935">
    <property type="term" value="P:chemotaxis"/>
    <property type="evidence" value="ECO:0000315"/>
    <property type="project" value="MGI"/>
</dbReference>
<dbReference type="GO" id="GO:0007010">
    <property type="term" value="P:cytoskeleton organization"/>
    <property type="evidence" value="ECO:0000304"/>
    <property type="project" value="MGI"/>
</dbReference>
<dbReference type="GO" id="GO:0006952">
    <property type="term" value="P:defense response"/>
    <property type="evidence" value="ECO:0000315"/>
    <property type="project" value="MGI"/>
</dbReference>
<dbReference type="GO" id="GO:0007165">
    <property type="term" value="P:signal transduction"/>
    <property type="evidence" value="ECO:0007669"/>
    <property type="project" value="InterPro"/>
</dbReference>
<dbReference type="InterPro" id="IPR006018">
    <property type="entry name" value="Caldesmon_LSP"/>
</dbReference>
<dbReference type="InterPro" id="IPR002211">
    <property type="entry name" value="Lymphspecific"/>
</dbReference>
<dbReference type="PANTHER" id="PTHR18949">
    <property type="entry name" value="CALDESMON"/>
    <property type="match status" value="1"/>
</dbReference>
<dbReference type="PANTHER" id="PTHR18949:SF1">
    <property type="entry name" value="LYMPHOCYTE-SPECIFIC PROTEIN 1"/>
    <property type="match status" value="1"/>
</dbReference>
<dbReference type="Pfam" id="PF02029">
    <property type="entry name" value="Caldesmon"/>
    <property type="match status" value="1"/>
</dbReference>
<dbReference type="PRINTS" id="PR01083">
    <property type="entry name" value="LYMPHSPCIFIC"/>
</dbReference>
<proteinExistence type="evidence at protein level"/>
<gene>
    <name type="primary">Lsp1</name>
    <name type="synonym">Pp52</name>
    <name type="synonym">S37</name>
    <name type="synonym">Wp34</name>
</gene>
<name>LSP1_MOUSE</name>
<keyword id="KW-0007">Acetylation</keyword>
<keyword id="KW-0025">Alternative splicing</keyword>
<keyword id="KW-1003">Cell membrane</keyword>
<keyword id="KW-0903">Direct protein sequencing</keyword>
<keyword id="KW-0472">Membrane</keyword>
<keyword id="KW-0597">Phosphoprotein</keyword>
<keyword id="KW-1185">Reference proteome</keyword>
<reference key="1">
    <citation type="journal article" date="1988" name="J. Immunol.">
        <title>A new lymphocyte-specific gene which encodes a putative Ca2+-binding protein is not expressed in transformed T lymphocyte lines.</title>
        <authorList>
            <person name="Jongstra J."/>
            <person name="Tidmarsh G.F."/>
            <person name="Jongstra-Bilen J."/>
            <person name="Davis M.M."/>
        </authorList>
    </citation>
    <scope>NUCLEOTIDE SEQUENCE (ISOFORM 1)</scope>
    <source>
        <strain>BALB/cJ</strain>
    </source>
</reference>
<reference key="2">
    <citation type="journal article" date="1993" name="J. Immunol.">
        <title>Alternatively spliced pp52 mRNA in nonlymphoid stromal cells.</title>
        <authorList>
            <person name="Gimble J.M."/>
            <person name="Dorheim M.-A."/>
            <person name="Youkhana K."/>
            <person name="Hudson J."/>
            <person name="Nead M."/>
            <person name="Gilly M."/>
            <person name="Wood W.J. Jr."/>
            <person name="Hermanson G.G."/>
            <person name="Kuehl M."/>
            <person name="Wall R."/>
            <person name="Kincade P.W."/>
        </authorList>
    </citation>
    <scope>NUCLEOTIDE SEQUENCE [MRNA] (ISOFORM 2)</scope>
</reference>
<reference key="3">
    <citation type="journal article" date="1994" name="Mol. Immunol.">
        <title>The LSP1 gene is expressed in cultured normal and transformed mouse macrophages.</title>
        <authorList>
            <person name="Jongstra J."/>
            <person name="Ittel M.E."/>
            <person name="Iscove N.N."/>
            <person name="Brady G."/>
        </authorList>
    </citation>
    <scope>NUCLEOTIDE SEQUENCE [MRNA] (ISOFORM 1)</scope>
    <source>
        <strain>BALB/cJ</strain>
    </source>
</reference>
<reference key="4">
    <citation type="journal article" date="1995" name="J. Biochem.">
        <title>Protein kinase C phosphorylates p50 LSP1 and induces translocation of p50 LSP1 in T lymphocytes.</title>
        <authorList>
            <person name="Matsumoto N."/>
            <person name="Kojima S."/>
            <person name="Osawa T."/>
            <person name="Toyoshima S."/>
        </authorList>
    </citation>
    <scope>NUCLEOTIDE SEQUENCE [MRNA] (ISOFORM 1)</scope>
    <scope>PHOSPHORYLATION</scope>
    <source>
        <strain>ICR</strain>
        <tissue>Thymus</tissue>
    </source>
</reference>
<reference key="5">
    <citation type="journal article" date="1995" name="J. Biochem.">
        <title>Lymphocyte isoforms of mouse p50 LSP1, which are phosphorylated in mitogen-activated T cells, are formed through alternative splicing and phosphorylation.</title>
        <authorList>
            <person name="Matsumoto N."/>
            <person name="Kita K."/>
            <person name="Kojima S."/>
            <person name="Yamamoto K."/>
            <person name="Irimura T."/>
            <person name="Miyagi M."/>
            <person name="Tsunasawa S."/>
            <person name="Toyoshima S."/>
        </authorList>
    </citation>
    <scope>NUCLEOTIDE SEQUENCE [MRNA] (ISOFORM 1)</scope>
    <scope>ALTERNATIVE SPLICING</scope>
    <source>
        <strain>ICR</strain>
        <tissue>Thymus</tissue>
    </source>
</reference>
<reference key="6">
    <citation type="journal article" date="2009" name="PLoS Biol.">
        <title>Lineage-specific biology revealed by a finished genome assembly of the mouse.</title>
        <authorList>
            <person name="Church D.M."/>
            <person name="Goodstadt L."/>
            <person name="Hillier L.W."/>
            <person name="Zody M.C."/>
            <person name="Goldstein S."/>
            <person name="She X."/>
            <person name="Bult C.J."/>
            <person name="Agarwala R."/>
            <person name="Cherry J.L."/>
            <person name="DiCuccio M."/>
            <person name="Hlavina W."/>
            <person name="Kapustin Y."/>
            <person name="Meric P."/>
            <person name="Maglott D."/>
            <person name="Birtle Z."/>
            <person name="Marques A.C."/>
            <person name="Graves T."/>
            <person name="Zhou S."/>
            <person name="Teague B."/>
            <person name="Potamousis K."/>
            <person name="Churas C."/>
            <person name="Place M."/>
            <person name="Herschleb J."/>
            <person name="Runnheim R."/>
            <person name="Forrest D."/>
            <person name="Amos-Landgraf J."/>
            <person name="Schwartz D.C."/>
            <person name="Cheng Z."/>
            <person name="Lindblad-Toh K."/>
            <person name="Eichler E.E."/>
            <person name="Ponting C.P."/>
        </authorList>
    </citation>
    <scope>NUCLEOTIDE SEQUENCE [LARGE SCALE GENOMIC DNA]</scope>
    <source>
        <strain>C57BL/6J</strain>
    </source>
</reference>
<reference key="7">
    <citation type="journal article" date="2004" name="Genome Res.">
        <title>The status, quality, and expansion of the NIH full-length cDNA project: the Mammalian Gene Collection (MGC).</title>
        <authorList>
            <consortium name="The MGC Project Team"/>
        </authorList>
    </citation>
    <scope>NUCLEOTIDE SEQUENCE [LARGE SCALE MRNA] (ISOFORM 2)</scope>
    <source>
        <strain>FVB/N</strain>
        <tissue>Mammary gland</tissue>
    </source>
</reference>
<reference key="8">
    <citation type="journal article" date="1996" name="Genomics">
        <title>Alternatively spliced exons encode the tissue-specific 5' termini of leukocyte pp52 and stromal cell S37 mRNA isoforms.</title>
        <authorList>
            <person name="Thompson A.A."/>
            <person name="Omori S.A."/>
            <person name="Gilly M.J."/>
            <person name="May W."/>
            <person name="Gordon M.S."/>
            <person name="Wood W.J. Jr."/>
            <person name="Miyoshi E."/>
            <person name="Malone C.S."/>
            <person name="Gimble J."/>
            <person name="Denny C.T."/>
            <person name="Wall R."/>
        </authorList>
    </citation>
    <scope>NUCLEOTIDE SEQUENCE [GENOMIC DNA / MRNA] OF 1-124 (ISOFORMS 1 AND 2)</scope>
    <scope>ALTERNATIVE SPLICING</scope>
    <source>
        <strain>BALB/cJ</strain>
        <tissue>Leukocyte</tissue>
        <tissue>Stromal cell</tissue>
    </source>
</reference>
<reference key="9">
    <citation type="journal article" date="2005" name="Science">
        <title>The transcriptional landscape of the mammalian genome.</title>
        <authorList>
            <person name="Carninci P."/>
            <person name="Kasukawa T."/>
            <person name="Katayama S."/>
            <person name="Gough J."/>
            <person name="Frith M.C."/>
            <person name="Maeda N."/>
            <person name="Oyama R."/>
            <person name="Ravasi T."/>
            <person name="Lenhard B."/>
            <person name="Wells C."/>
            <person name="Kodzius R."/>
            <person name="Shimokawa K."/>
            <person name="Bajic V.B."/>
            <person name="Brenner S.E."/>
            <person name="Batalov S."/>
            <person name="Forrest A.R."/>
            <person name="Zavolan M."/>
            <person name="Davis M.J."/>
            <person name="Wilming L.G."/>
            <person name="Aidinis V."/>
            <person name="Allen J.E."/>
            <person name="Ambesi-Impiombato A."/>
            <person name="Apweiler R."/>
            <person name="Aturaliya R.N."/>
            <person name="Bailey T.L."/>
            <person name="Bansal M."/>
            <person name="Baxter L."/>
            <person name="Beisel K.W."/>
            <person name="Bersano T."/>
            <person name="Bono H."/>
            <person name="Chalk A.M."/>
            <person name="Chiu K.P."/>
            <person name="Choudhary V."/>
            <person name="Christoffels A."/>
            <person name="Clutterbuck D.R."/>
            <person name="Crowe M.L."/>
            <person name="Dalla E."/>
            <person name="Dalrymple B.P."/>
            <person name="de Bono B."/>
            <person name="Della Gatta G."/>
            <person name="di Bernardo D."/>
            <person name="Down T."/>
            <person name="Engstrom P."/>
            <person name="Fagiolini M."/>
            <person name="Faulkner G."/>
            <person name="Fletcher C.F."/>
            <person name="Fukushima T."/>
            <person name="Furuno M."/>
            <person name="Futaki S."/>
            <person name="Gariboldi M."/>
            <person name="Georgii-Hemming P."/>
            <person name="Gingeras T.R."/>
            <person name="Gojobori T."/>
            <person name="Green R.E."/>
            <person name="Gustincich S."/>
            <person name="Harbers M."/>
            <person name="Hayashi Y."/>
            <person name="Hensch T.K."/>
            <person name="Hirokawa N."/>
            <person name="Hill D."/>
            <person name="Huminiecki L."/>
            <person name="Iacono M."/>
            <person name="Ikeo K."/>
            <person name="Iwama A."/>
            <person name="Ishikawa T."/>
            <person name="Jakt M."/>
            <person name="Kanapin A."/>
            <person name="Katoh M."/>
            <person name="Kawasawa Y."/>
            <person name="Kelso J."/>
            <person name="Kitamura H."/>
            <person name="Kitano H."/>
            <person name="Kollias G."/>
            <person name="Krishnan S.P."/>
            <person name="Kruger A."/>
            <person name="Kummerfeld S.K."/>
            <person name="Kurochkin I.V."/>
            <person name="Lareau L.F."/>
            <person name="Lazarevic D."/>
            <person name="Lipovich L."/>
            <person name="Liu J."/>
            <person name="Liuni S."/>
            <person name="McWilliam S."/>
            <person name="Madan Babu M."/>
            <person name="Madera M."/>
            <person name="Marchionni L."/>
            <person name="Matsuda H."/>
            <person name="Matsuzawa S."/>
            <person name="Miki H."/>
            <person name="Mignone F."/>
            <person name="Miyake S."/>
            <person name="Morris K."/>
            <person name="Mottagui-Tabar S."/>
            <person name="Mulder N."/>
            <person name="Nakano N."/>
            <person name="Nakauchi H."/>
            <person name="Ng P."/>
            <person name="Nilsson R."/>
            <person name="Nishiguchi S."/>
            <person name="Nishikawa S."/>
            <person name="Nori F."/>
            <person name="Ohara O."/>
            <person name="Okazaki Y."/>
            <person name="Orlando V."/>
            <person name="Pang K.C."/>
            <person name="Pavan W.J."/>
            <person name="Pavesi G."/>
            <person name="Pesole G."/>
            <person name="Petrovsky N."/>
            <person name="Piazza S."/>
            <person name="Reed J."/>
            <person name="Reid J.F."/>
            <person name="Ring B.Z."/>
            <person name="Ringwald M."/>
            <person name="Rost B."/>
            <person name="Ruan Y."/>
            <person name="Salzberg S.L."/>
            <person name="Sandelin A."/>
            <person name="Schneider C."/>
            <person name="Schoenbach C."/>
            <person name="Sekiguchi K."/>
            <person name="Semple C.A."/>
            <person name="Seno S."/>
            <person name="Sessa L."/>
            <person name="Sheng Y."/>
            <person name="Shibata Y."/>
            <person name="Shimada H."/>
            <person name="Shimada K."/>
            <person name="Silva D."/>
            <person name="Sinclair B."/>
            <person name="Sperling S."/>
            <person name="Stupka E."/>
            <person name="Sugiura K."/>
            <person name="Sultana R."/>
            <person name="Takenaka Y."/>
            <person name="Taki K."/>
            <person name="Tammoja K."/>
            <person name="Tan S.L."/>
            <person name="Tang S."/>
            <person name="Taylor M.S."/>
            <person name="Tegner J."/>
            <person name="Teichmann S.A."/>
            <person name="Ueda H.R."/>
            <person name="van Nimwegen E."/>
            <person name="Verardo R."/>
            <person name="Wei C.L."/>
            <person name="Yagi K."/>
            <person name="Yamanishi H."/>
            <person name="Zabarovsky E."/>
            <person name="Zhu S."/>
            <person name="Zimmer A."/>
            <person name="Hide W."/>
            <person name="Bult C."/>
            <person name="Grimmond S.M."/>
            <person name="Teasdale R.D."/>
            <person name="Liu E.T."/>
            <person name="Brusic V."/>
            <person name="Quackenbush J."/>
            <person name="Wahlestedt C."/>
            <person name="Mattick J.S."/>
            <person name="Hume D.A."/>
            <person name="Kai C."/>
            <person name="Sasaki D."/>
            <person name="Tomaru Y."/>
            <person name="Fukuda S."/>
            <person name="Kanamori-Katayama M."/>
            <person name="Suzuki M."/>
            <person name="Aoki J."/>
            <person name="Arakawa T."/>
            <person name="Iida J."/>
            <person name="Imamura K."/>
            <person name="Itoh M."/>
            <person name="Kato T."/>
            <person name="Kawaji H."/>
            <person name="Kawagashira N."/>
            <person name="Kawashima T."/>
            <person name="Kojima M."/>
            <person name="Kondo S."/>
            <person name="Konno H."/>
            <person name="Nakano K."/>
            <person name="Ninomiya N."/>
            <person name="Nishio T."/>
            <person name="Okada M."/>
            <person name="Plessy C."/>
            <person name="Shibata K."/>
            <person name="Shiraki T."/>
            <person name="Suzuki S."/>
            <person name="Tagami M."/>
            <person name="Waki K."/>
            <person name="Watahiki A."/>
            <person name="Okamura-Oho Y."/>
            <person name="Suzuki H."/>
            <person name="Kawai J."/>
            <person name="Hayashizaki Y."/>
        </authorList>
    </citation>
    <scope>NUCLEOTIDE SEQUENCE [LARGE SCALE MRNA] OF 1-127 (ISOFORM 2)</scope>
    <source>
        <strain>C57BL/6J</strain>
        <tissue>Testis</tissue>
    </source>
</reference>
<reference key="10">
    <citation type="journal article" date="1993" name="J. Biochem.">
        <title>Characterization of the 50 kDa protein phosphorylated in concanavalin A-stimulated mouse T cells.</title>
        <authorList>
            <person name="Matsumoto N."/>
            <person name="Toyoshima S."/>
            <person name="Osawa T."/>
        </authorList>
    </citation>
    <scope>PROTEIN SEQUENCE OF 55-81; 131-144; 211-229; 238-255 AND 311-330</scope>
    <scope>PHOSPHORYLATION</scope>
    <source>
        <tissue>T-cell</tissue>
    </source>
</reference>
<reference key="11">
    <citation type="journal article" date="2007" name="Biochem. Biophys. Res. Commun.">
        <title>MAPKAPK2-mediated LSP1 phosphorylation and FMLP-induced neutrophil polarization.</title>
        <authorList>
            <person name="Wu Y."/>
            <person name="Zhan L."/>
            <person name="Ai Y."/>
            <person name="Hannigan M."/>
            <person name="Gaestel M."/>
            <person name="Huang C.-K."/>
            <person name="Madri J.A."/>
        </authorList>
    </citation>
    <scope>PHOSPHORYLATION AT SER-243 BY MAPKAPK2</scope>
    <scope>MUTAGENESIS OF SER-195 AND SER-243</scope>
    <scope>FUNCTION</scope>
</reference>
<reference key="12">
    <citation type="journal article" date="2007" name="Proc. Natl. Acad. Sci. U.S.A.">
        <title>Large-scale phosphorylation analysis of mouse liver.</title>
        <authorList>
            <person name="Villen J."/>
            <person name="Beausoleil S.A."/>
            <person name="Gerber S.A."/>
            <person name="Gygi S.P."/>
        </authorList>
    </citation>
    <scope>PHOSPHORYLATION [LARGE SCALE ANALYSIS] AT THR-166 AND SER-168</scope>
    <scope>IDENTIFICATION BY MASS SPECTROMETRY [LARGE SCALE ANALYSIS]</scope>
    <source>
        <tissue>Liver</tissue>
    </source>
</reference>
<reference key="13">
    <citation type="journal article" date="2010" name="Cell">
        <title>A tissue-specific atlas of mouse protein phosphorylation and expression.</title>
        <authorList>
            <person name="Huttlin E.L."/>
            <person name="Jedrychowski M.P."/>
            <person name="Elias J.E."/>
            <person name="Goswami T."/>
            <person name="Rad R."/>
            <person name="Beausoleil S.A."/>
            <person name="Villen J."/>
            <person name="Haas W."/>
            <person name="Sowa M.E."/>
            <person name="Gygi S.P."/>
        </authorList>
    </citation>
    <scope>PHOSPHORYLATION [LARGE SCALE ANALYSIS] AT THR-166; SER-168; SER-180; SER-184 AND SER-243</scope>
    <scope>IDENTIFICATION BY MASS SPECTROMETRY [LARGE SCALE ANALYSIS]</scope>
    <source>
        <tissue>Brown adipose tissue</tissue>
        <tissue>Heart</tissue>
        <tissue>Kidney</tissue>
        <tissue>Liver</tissue>
        <tissue>Lung</tissue>
        <tissue>Pancreas</tissue>
        <tissue>Spleen</tissue>
        <tissue>Testis</tissue>
    </source>
</reference>
<organism>
    <name type="scientific">Mus musculus</name>
    <name type="common">Mouse</name>
    <dbReference type="NCBI Taxonomy" id="10090"/>
    <lineage>
        <taxon>Eukaryota</taxon>
        <taxon>Metazoa</taxon>
        <taxon>Chordata</taxon>
        <taxon>Craniata</taxon>
        <taxon>Vertebrata</taxon>
        <taxon>Euteleostomi</taxon>
        <taxon>Mammalia</taxon>
        <taxon>Eutheria</taxon>
        <taxon>Euarchontoglires</taxon>
        <taxon>Glires</taxon>
        <taxon>Rodentia</taxon>
        <taxon>Myomorpha</taxon>
        <taxon>Muroidea</taxon>
        <taxon>Muridae</taxon>
        <taxon>Murinae</taxon>
        <taxon>Mus</taxon>
        <taxon>Mus</taxon>
    </lineage>
</organism>
<evidence type="ECO:0000250" key="1">
    <source>
        <dbReference type="UniProtKB" id="P33241"/>
    </source>
</evidence>
<evidence type="ECO:0000255" key="2"/>
<evidence type="ECO:0000256" key="3">
    <source>
        <dbReference type="SAM" id="MobiDB-lite"/>
    </source>
</evidence>
<evidence type="ECO:0000269" key="4">
    <source>
    </source>
</evidence>
<evidence type="ECO:0000269" key="5">
    <source>
    </source>
</evidence>
<evidence type="ECO:0000269" key="6">
    <source>
    </source>
</evidence>
<evidence type="ECO:0000303" key="7">
    <source>
    </source>
</evidence>
<evidence type="ECO:0000303" key="8">
    <source>
    </source>
</evidence>
<evidence type="ECO:0000303" key="9">
    <source>
    </source>
</evidence>
<evidence type="ECO:0000303" key="10">
    <source>
    </source>
</evidence>
<evidence type="ECO:0000305" key="11"/>
<evidence type="ECO:0007744" key="12">
    <source>
    </source>
</evidence>
<evidence type="ECO:0007744" key="13">
    <source>
    </source>
</evidence>
<comment type="function">
    <text evidence="4">May play a role in mediating neutrophil activation and chemotaxis.</text>
</comment>
<comment type="subcellular location">
    <subcellularLocation>
        <location>Cell membrane</location>
        <topology>Peripheral membrane protein</topology>
        <orientation>Cytoplasmic side</orientation>
    </subcellularLocation>
</comment>
<comment type="alternative products">
    <event type="alternative splicing"/>
    <isoform>
        <id>P19973-1</id>
        <name>1</name>
        <sequence type="displayed"/>
    </isoform>
    <isoform>
        <id>P19973-2</id>
        <name>2</name>
        <sequence type="described" ref="VSP_004313"/>
    </isoform>
</comment>
<comment type="tissue specificity">
    <text>Isoform 1 is expressed in normal mouse B and T-lymphocytes and in transformed B-cells but not (or in smaller amounts) in nine T-lymphoma lines tested. Isoform 2 is expressed in non-lymphoid cell lines (myocytes, stromal cells, fibroblasts).</text>
</comment>
<comment type="PTM">
    <text evidence="4 5 6">Phosphorylated by casein kinase II, protein kinase C and MAPKAPK2. Phosphorylation by PKC induces translocation from membrane to cytoplasm. Phosphorylation by MAPKAPK2 may regulate neutrophil chemotaxis.</text>
</comment>
<sequence>MAEAAIDPRCEEQEELHAEDSEGLTTQWREEDEEEAAREQRQRERERQLQDQDKDKEDDGGHSLEQPGQQTLISLKSSELDEDEGFGDWSQKPEPRQQFWGNEGTAEGTEPSQSERPEEKQTEESSHQAKVHLEESNLSYREPDPEDAVGGSGEAEEHLIRHQVRTPSPLALEDTVELSSPPLSPTTKLADRTESLNRSIKKSNSVKKSQPTLPISTIDERLQQYTQATESSGRTPKLSRQPSIELPSMAVASTKTLWETGEVQSQSASKTPSCQDIVAGDMSKKSLWEQKGGSKISSTIKSTPSGKRYKFVATGHGKYEKVLVDEGSAP</sequence>
<accession>P19973</accession>
<accession>A2A6J5</accession>
<accession>A2A6J6</accession>
<accession>P97339</accession>
<accession>Q04950</accession>
<accession>Q62022</accession>
<accession>Q62023</accession>
<accession>Q62024</accession>
<accession>Q8CD28</accession>
<accession>Q99L65</accession>
<protein>
    <recommendedName>
        <fullName>Lymphocyte-specific protein 1</fullName>
    </recommendedName>
    <alternativeName>
        <fullName>52 kDa phosphoprotein</fullName>
        <shortName>pp52</shortName>
    </alternativeName>
    <alternativeName>
        <fullName>Lymphocyte-specific antigen WP34</fullName>
    </alternativeName>
    <alternativeName>
        <fullName>S37 protein</fullName>
    </alternativeName>
</protein>